<feature type="chain" id="PRO_1000064329" description="L-carnitine/gamma-butyrobetaine antiporter">
    <location>
        <begin position="1"/>
        <end position="504"/>
    </location>
</feature>
<feature type="transmembrane region" description="Helical" evidence="1">
    <location>
        <begin position="10"/>
        <end position="30"/>
    </location>
</feature>
<feature type="transmembrane region" description="Helical" evidence="1">
    <location>
        <begin position="51"/>
        <end position="71"/>
    </location>
</feature>
<feature type="transmembrane region" description="Helical" evidence="1">
    <location>
        <begin position="92"/>
        <end position="112"/>
    </location>
</feature>
<feature type="transmembrane region" description="Helical" evidence="1">
    <location>
        <begin position="143"/>
        <end position="163"/>
    </location>
</feature>
<feature type="transmembrane region" description="Helical" evidence="1">
    <location>
        <begin position="195"/>
        <end position="215"/>
    </location>
</feature>
<feature type="transmembrane region" description="Helical" evidence="1">
    <location>
        <begin position="231"/>
        <end position="251"/>
    </location>
</feature>
<feature type="transmembrane region" description="Helical" evidence="1">
    <location>
        <begin position="263"/>
        <end position="283"/>
    </location>
</feature>
<feature type="transmembrane region" description="Helical" evidence="1">
    <location>
        <begin position="316"/>
        <end position="336"/>
    </location>
</feature>
<feature type="transmembrane region" description="Helical" evidence="1">
    <location>
        <begin position="347"/>
        <end position="367"/>
    </location>
</feature>
<feature type="transmembrane region" description="Helical" evidence="1">
    <location>
        <begin position="398"/>
        <end position="418"/>
    </location>
</feature>
<feature type="transmembrane region" description="Helical" evidence="1">
    <location>
        <begin position="446"/>
        <end position="466"/>
    </location>
</feature>
<feature type="transmembrane region" description="Helical" evidence="1">
    <location>
        <begin position="475"/>
        <end position="495"/>
    </location>
</feature>
<comment type="function">
    <text evidence="1">Catalyzes the exchange of L-carnitine for gamma-butyrobetaine.</text>
</comment>
<comment type="catalytic activity">
    <reaction evidence="1">
        <text>4-(trimethylamino)butanoate(in) + (R)-carnitine(out) = 4-(trimethylamino)butanoate(out) + (R)-carnitine(in)</text>
        <dbReference type="Rhea" id="RHEA:29427"/>
        <dbReference type="ChEBI" id="CHEBI:16244"/>
        <dbReference type="ChEBI" id="CHEBI:16347"/>
    </reaction>
</comment>
<comment type="pathway">
    <text evidence="1">Amine and polyamine metabolism; carnitine metabolism.</text>
</comment>
<comment type="subunit">
    <text evidence="1">Homotrimer.</text>
</comment>
<comment type="subcellular location">
    <subcellularLocation>
        <location evidence="1">Cell inner membrane</location>
        <topology evidence="1">Multi-pass membrane protein</topology>
    </subcellularLocation>
</comment>
<comment type="similarity">
    <text evidence="1">Belongs to the BCCT transporter (TC 2.A.15) family. CaiT subfamily.</text>
</comment>
<dbReference type="EMBL" id="CP000802">
    <property type="protein sequence ID" value="ABV04444.1"/>
    <property type="molecule type" value="Genomic_DNA"/>
</dbReference>
<dbReference type="RefSeq" id="WP_000787103.1">
    <property type="nucleotide sequence ID" value="NC_009800.1"/>
</dbReference>
<dbReference type="SMR" id="A7ZVZ0"/>
<dbReference type="GeneID" id="93777395"/>
<dbReference type="KEGG" id="ecx:EcHS_A0044"/>
<dbReference type="HOGENOM" id="CLU_010118_6_0_6"/>
<dbReference type="UniPathway" id="UPA00117"/>
<dbReference type="GO" id="GO:0005886">
    <property type="term" value="C:plasma membrane"/>
    <property type="evidence" value="ECO:0007669"/>
    <property type="project" value="UniProtKB-SubCell"/>
</dbReference>
<dbReference type="GO" id="GO:0044667">
    <property type="term" value="F:(R)-carnitine:4-(trimethylammonio)butanoate antiporter activity"/>
    <property type="evidence" value="ECO:0007669"/>
    <property type="project" value="UniProtKB-UniRule"/>
</dbReference>
<dbReference type="GO" id="GO:1900751">
    <property type="term" value="P:4-(trimethylammonio)butanoate transport"/>
    <property type="evidence" value="ECO:0007669"/>
    <property type="project" value="InterPro"/>
</dbReference>
<dbReference type="GO" id="GO:0009437">
    <property type="term" value="P:carnitine metabolic process"/>
    <property type="evidence" value="ECO:0007669"/>
    <property type="project" value="UniProtKB-UniRule"/>
</dbReference>
<dbReference type="HAMAP" id="MF_01049">
    <property type="entry name" value="CaiT"/>
    <property type="match status" value="1"/>
</dbReference>
<dbReference type="InterPro" id="IPR018093">
    <property type="entry name" value="BCCT_CS"/>
</dbReference>
<dbReference type="InterPro" id="IPR000060">
    <property type="entry name" value="BCCT_transptr"/>
</dbReference>
<dbReference type="InterPro" id="IPR023449">
    <property type="entry name" value="BCCT_transptr_CaiT"/>
</dbReference>
<dbReference type="NCBIfam" id="TIGR00842">
    <property type="entry name" value="bcct"/>
    <property type="match status" value="1"/>
</dbReference>
<dbReference type="NCBIfam" id="NF002887">
    <property type="entry name" value="PRK03356.1"/>
    <property type="match status" value="1"/>
</dbReference>
<dbReference type="PANTHER" id="PTHR30047">
    <property type="entry name" value="HIGH-AFFINITY CHOLINE TRANSPORT PROTEIN-RELATED"/>
    <property type="match status" value="1"/>
</dbReference>
<dbReference type="PANTHER" id="PTHR30047:SF11">
    <property type="entry name" value="L-CARNITINE_GAMMA-BUTYROBETAINE ANTIPORTER"/>
    <property type="match status" value="1"/>
</dbReference>
<dbReference type="Pfam" id="PF02028">
    <property type="entry name" value="BCCT"/>
    <property type="match status" value="1"/>
</dbReference>
<dbReference type="PROSITE" id="PS01303">
    <property type="entry name" value="BCCT"/>
    <property type="match status" value="1"/>
</dbReference>
<gene>
    <name evidence="1" type="primary">caiT</name>
    <name type="ordered locus">EcHS_A0044</name>
</gene>
<organism>
    <name type="scientific">Escherichia coli O9:H4 (strain HS)</name>
    <dbReference type="NCBI Taxonomy" id="331112"/>
    <lineage>
        <taxon>Bacteria</taxon>
        <taxon>Pseudomonadati</taxon>
        <taxon>Pseudomonadota</taxon>
        <taxon>Gammaproteobacteria</taxon>
        <taxon>Enterobacterales</taxon>
        <taxon>Enterobacteriaceae</taxon>
        <taxon>Escherichia</taxon>
    </lineage>
</organism>
<keyword id="KW-0050">Antiport</keyword>
<keyword id="KW-0997">Cell inner membrane</keyword>
<keyword id="KW-1003">Cell membrane</keyword>
<keyword id="KW-0472">Membrane</keyword>
<keyword id="KW-0812">Transmembrane</keyword>
<keyword id="KW-1133">Transmembrane helix</keyword>
<keyword id="KW-0813">Transport</keyword>
<accession>A7ZVZ0</accession>
<protein>
    <recommendedName>
        <fullName evidence="1">L-carnitine/gamma-butyrobetaine antiporter</fullName>
    </recommendedName>
</protein>
<name>CAIT_ECOHS</name>
<proteinExistence type="inferred from homology"/>
<sequence>MKNEKRKTGIEPKVFFPPLIIVGILCWLTVRDLDAANVVINAVFSYVTNVWGWAFEWYMVVMLFGWFWLVFGPYAKKRLGNEPPEFSTASWIFMMFASCTSAAVLFWGSIEIYYYISTPPFGLEPNSTGAKELGLAYSLFHWGPLPWATYSFLSVAFAYFFFVRKMEVIRPSSTLVPLVGEKHAKGLFGTIVDNFYLVALIFAMGTSLGLATPLVTECMQWLFGIPHTLQLDAIIITCWIILNAICVACGLQKGVRIASDVRSYLSFLMLGWVFIVSGASFIMNYFTDSVGMLLMYLPRMLFYTDPIAKGGFPQGWTVFYWAWWVIYAIQMSIFLARISRGRTVRELCFGMVLGLTASTWILWTVLGSNTLLLIDKNIINIPNLIEQYGVARAIIETWAALPLSTATMWGFFILCFIATVTLVNACSYTLAMSTCREVRDGEEPPLLVRIGWSILVGIIGIVLLALGGLKPIQTAIIAGGCPLFFVNIMVTLSFIKDAKQNWKD</sequence>
<evidence type="ECO:0000255" key="1">
    <source>
        <dbReference type="HAMAP-Rule" id="MF_01049"/>
    </source>
</evidence>
<reference key="1">
    <citation type="journal article" date="2008" name="J. Bacteriol.">
        <title>The pangenome structure of Escherichia coli: comparative genomic analysis of E. coli commensal and pathogenic isolates.</title>
        <authorList>
            <person name="Rasko D.A."/>
            <person name="Rosovitz M.J."/>
            <person name="Myers G.S.A."/>
            <person name="Mongodin E.F."/>
            <person name="Fricke W.F."/>
            <person name="Gajer P."/>
            <person name="Crabtree J."/>
            <person name="Sebaihia M."/>
            <person name="Thomson N.R."/>
            <person name="Chaudhuri R."/>
            <person name="Henderson I.R."/>
            <person name="Sperandio V."/>
            <person name="Ravel J."/>
        </authorList>
    </citation>
    <scope>NUCLEOTIDE SEQUENCE [LARGE SCALE GENOMIC DNA]</scope>
    <source>
        <strain>HS</strain>
    </source>
</reference>